<keyword id="KW-0997">Cell inner membrane</keyword>
<keyword id="KW-1003">Cell membrane</keyword>
<keyword id="KW-0378">Hydrolase</keyword>
<keyword id="KW-0441">Lipid A biosynthesis</keyword>
<keyword id="KW-0444">Lipid biosynthesis</keyword>
<keyword id="KW-0443">Lipid metabolism</keyword>
<keyword id="KW-0464">Manganese</keyword>
<keyword id="KW-0472">Membrane</keyword>
<keyword id="KW-0479">Metal-binding</keyword>
<name>LPXH_PSEAB</name>
<evidence type="ECO:0000255" key="1">
    <source>
        <dbReference type="HAMAP-Rule" id="MF_00575"/>
    </source>
</evidence>
<organism>
    <name type="scientific">Pseudomonas aeruginosa (strain UCBPP-PA14)</name>
    <dbReference type="NCBI Taxonomy" id="208963"/>
    <lineage>
        <taxon>Bacteria</taxon>
        <taxon>Pseudomonadati</taxon>
        <taxon>Pseudomonadota</taxon>
        <taxon>Gammaproteobacteria</taxon>
        <taxon>Pseudomonadales</taxon>
        <taxon>Pseudomonadaceae</taxon>
        <taxon>Pseudomonas</taxon>
    </lineage>
</organism>
<reference key="1">
    <citation type="journal article" date="2006" name="Genome Biol.">
        <title>Genomic analysis reveals that Pseudomonas aeruginosa virulence is combinatorial.</title>
        <authorList>
            <person name="Lee D.G."/>
            <person name="Urbach J.M."/>
            <person name="Wu G."/>
            <person name="Liberati N.T."/>
            <person name="Feinbaum R.L."/>
            <person name="Miyata S."/>
            <person name="Diggins L.T."/>
            <person name="He J."/>
            <person name="Saucier M."/>
            <person name="Deziel E."/>
            <person name="Friedman L."/>
            <person name="Li L."/>
            <person name="Grills G."/>
            <person name="Montgomery K."/>
            <person name="Kucherlapati R."/>
            <person name="Rahme L.G."/>
            <person name="Ausubel F.M."/>
        </authorList>
    </citation>
    <scope>NUCLEOTIDE SEQUENCE [LARGE SCALE GENOMIC DNA]</scope>
    <source>
        <strain>UCBPP-PA14</strain>
    </source>
</reference>
<comment type="function">
    <text evidence="1">Hydrolyzes the pyrophosphate bond of UDP-2,3-diacylglucosamine to yield 2,3-diacylglucosamine 1-phosphate (lipid X) and UMP by catalyzing the attack of water at the alpha-P atom. Involved in the biosynthesis of lipid A, a phosphorylated glycolipid that anchors the lipopolysaccharide to the outer membrane of the cell.</text>
</comment>
<comment type="catalytic activity">
    <reaction evidence="1">
        <text>UDP-2-N,3-O-bis[(3R)-3-hydroxytetradecanoyl]-alpha-D-glucosamine + H2O = 2-N,3-O-bis[(3R)-3-hydroxytetradecanoyl]-alpha-D-glucosaminyl 1-phosphate + UMP + 2 H(+)</text>
        <dbReference type="Rhea" id="RHEA:25213"/>
        <dbReference type="ChEBI" id="CHEBI:15377"/>
        <dbReference type="ChEBI" id="CHEBI:15378"/>
        <dbReference type="ChEBI" id="CHEBI:57865"/>
        <dbReference type="ChEBI" id="CHEBI:57957"/>
        <dbReference type="ChEBI" id="CHEBI:78847"/>
        <dbReference type="EC" id="3.6.1.54"/>
    </reaction>
</comment>
<comment type="cofactor">
    <cofactor evidence="1">
        <name>Mn(2+)</name>
        <dbReference type="ChEBI" id="CHEBI:29035"/>
    </cofactor>
    <text evidence="1">Binds 2 Mn(2+) ions per subunit in a binuclear metal center.</text>
</comment>
<comment type="pathway">
    <text evidence="1">Glycolipid biosynthesis; lipid IV(A) biosynthesis; lipid IV(A) from (3R)-3-hydroxytetradecanoyl-[acyl-carrier-protein] and UDP-N-acetyl-alpha-D-glucosamine: step 4/6.</text>
</comment>
<comment type="subcellular location">
    <subcellularLocation>
        <location evidence="1">Cell inner membrane</location>
        <topology evidence="1">Peripheral membrane protein</topology>
        <orientation evidence="1">Cytoplasmic side</orientation>
    </subcellularLocation>
</comment>
<comment type="similarity">
    <text evidence="1">Belongs to the LpxH family.</text>
</comment>
<proteinExistence type="inferred from homology"/>
<feature type="chain" id="PRO_1000025069" description="UDP-2,3-diacylglucosamine hydrolase">
    <location>
        <begin position="1"/>
        <end position="240"/>
    </location>
</feature>
<feature type="binding site" evidence="1">
    <location>
        <position position="8"/>
    </location>
    <ligand>
        <name>Mn(2+)</name>
        <dbReference type="ChEBI" id="CHEBI:29035"/>
        <label>1</label>
    </ligand>
</feature>
<feature type="binding site" evidence="1">
    <location>
        <position position="10"/>
    </location>
    <ligand>
        <name>Mn(2+)</name>
        <dbReference type="ChEBI" id="CHEBI:29035"/>
        <label>1</label>
    </ligand>
</feature>
<feature type="binding site" evidence="1">
    <location>
        <position position="41"/>
    </location>
    <ligand>
        <name>Mn(2+)</name>
        <dbReference type="ChEBI" id="CHEBI:29035"/>
        <label>1</label>
    </ligand>
</feature>
<feature type="binding site" evidence="1">
    <location>
        <position position="41"/>
    </location>
    <ligand>
        <name>Mn(2+)</name>
        <dbReference type="ChEBI" id="CHEBI:29035"/>
        <label>2</label>
    </ligand>
</feature>
<feature type="binding site" evidence="1">
    <location>
        <begin position="79"/>
        <end position="80"/>
    </location>
    <ligand>
        <name>substrate</name>
    </ligand>
</feature>
<feature type="binding site" evidence="1">
    <location>
        <position position="79"/>
    </location>
    <ligand>
        <name>Mn(2+)</name>
        <dbReference type="ChEBI" id="CHEBI:29035"/>
        <label>2</label>
    </ligand>
</feature>
<feature type="binding site" evidence="1">
    <location>
        <position position="114"/>
    </location>
    <ligand>
        <name>Mn(2+)</name>
        <dbReference type="ChEBI" id="CHEBI:29035"/>
        <label>2</label>
    </ligand>
</feature>
<feature type="binding site" evidence="1">
    <location>
        <position position="122"/>
    </location>
    <ligand>
        <name>substrate</name>
    </ligand>
</feature>
<feature type="binding site" evidence="1">
    <location>
        <position position="160"/>
    </location>
    <ligand>
        <name>substrate</name>
    </ligand>
</feature>
<feature type="binding site" evidence="1">
    <location>
        <position position="164"/>
    </location>
    <ligand>
        <name>substrate</name>
    </ligand>
</feature>
<feature type="binding site" evidence="1">
    <location>
        <position position="167"/>
    </location>
    <ligand>
        <name>substrate</name>
    </ligand>
</feature>
<feature type="binding site" evidence="1">
    <location>
        <position position="195"/>
    </location>
    <ligand>
        <name>Mn(2+)</name>
        <dbReference type="ChEBI" id="CHEBI:29035"/>
        <label>2</label>
    </ligand>
</feature>
<feature type="binding site" evidence="1">
    <location>
        <position position="195"/>
    </location>
    <ligand>
        <name>substrate</name>
    </ligand>
</feature>
<feature type="binding site" evidence="1">
    <location>
        <position position="197"/>
    </location>
    <ligand>
        <name>Mn(2+)</name>
        <dbReference type="ChEBI" id="CHEBI:29035"/>
        <label>1</label>
    </ligand>
</feature>
<protein>
    <recommendedName>
        <fullName evidence="1">UDP-2,3-diacylglucosamine hydrolase</fullName>
        <ecNumber evidence="1">3.6.1.54</ecNumber>
    </recommendedName>
    <alternativeName>
        <fullName evidence="1">UDP-2,3-diacylglucosamine diphosphatase</fullName>
    </alternativeName>
</protein>
<gene>
    <name evidence="1" type="primary">lpxH</name>
    <name type="ordered locus">PA14_41400</name>
</gene>
<sequence length="240" mass="27555">MSVLFISDLHLEAERPDITRAFLSFLDERARRAEALYILGDFFEAWIGDDGMDAFQRSIAQSLRQVADGGTRIYLMHGNRDFLIGKAFCREAGCTLLPDPSVIDLYGEPVLLMHGDSLCTRDEAYMRLRRWLRNPLTLWVLRHLPLATRHKLARKLRKESRAQTRMKAVDIIDVTPEEVPRVMRGHGVRTLIHGHTHRPAEHPLDIDGQPARRIVLGDWDRQGWALEIDANGHRQAPFPL</sequence>
<accession>Q02KT3</accession>
<dbReference type="EC" id="3.6.1.54" evidence="1"/>
<dbReference type="EMBL" id="CP000438">
    <property type="protein sequence ID" value="ABJ10976.1"/>
    <property type="molecule type" value="Genomic_DNA"/>
</dbReference>
<dbReference type="RefSeq" id="WP_003113585.1">
    <property type="nucleotide sequence ID" value="NZ_CP034244.1"/>
</dbReference>
<dbReference type="SMR" id="Q02KT3"/>
<dbReference type="KEGG" id="pau:PA14_41400"/>
<dbReference type="PseudoCAP" id="PA14_41400"/>
<dbReference type="HOGENOM" id="CLU_074586_0_0_6"/>
<dbReference type="BioCyc" id="PAER208963:G1G74-3468-MONOMER"/>
<dbReference type="UniPathway" id="UPA00359">
    <property type="reaction ID" value="UER00480"/>
</dbReference>
<dbReference type="Proteomes" id="UP000000653">
    <property type="component" value="Chromosome"/>
</dbReference>
<dbReference type="GO" id="GO:0005737">
    <property type="term" value="C:cytoplasm"/>
    <property type="evidence" value="ECO:0007669"/>
    <property type="project" value="InterPro"/>
</dbReference>
<dbReference type="GO" id="GO:0019897">
    <property type="term" value="C:extrinsic component of plasma membrane"/>
    <property type="evidence" value="ECO:0007669"/>
    <property type="project" value="UniProtKB-UniRule"/>
</dbReference>
<dbReference type="GO" id="GO:0030145">
    <property type="term" value="F:manganese ion binding"/>
    <property type="evidence" value="ECO:0007669"/>
    <property type="project" value="UniProtKB-UniRule"/>
</dbReference>
<dbReference type="GO" id="GO:0008758">
    <property type="term" value="F:UDP-2,3-diacylglucosamine hydrolase activity"/>
    <property type="evidence" value="ECO:0007669"/>
    <property type="project" value="UniProtKB-UniRule"/>
</dbReference>
<dbReference type="GO" id="GO:0009245">
    <property type="term" value="P:lipid A biosynthetic process"/>
    <property type="evidence" value="ECO:0007669"/>
    <property type="project" value="UniProtKB-UniRule"/>
</dbReference>
<dbReference type="CDD" id="cd07398">
    <property type="entry name" value="MPP_YbbF-LpxH"/>
    <property type="match status" value="1"/>
</dbReference>
<dbReference type="FunFam" id="3.60.21.10:FF:000012">
    <property type="entry name" value="UDP-2,3-diacylglucosamine hydrolase"/>
    <property type="match status" value="1"/>
</dbReference>
<dbReference type="Gene3D" id="3.60.21.10">
    <property type="match status" value="1"/>
</dbReference>
<dbReference type="HAMAP" id="MF_00575">
    <property type="entry name" value="LpxH"/>
    <property type="match status" value="1"/>
</dbReference>
<dbReference type="InterPro" id="IPR004843">
    <property type="entry name" value="Calcineurin-like_PHP_ApaH"/>
</dbReference>
<dbReference type="InterPro" id="IPR043461">
    <property type="entry name" value="LpxH-like"/>
</dbReference>
<dbReference type="InterPro" id="IPR029052">
    <property type="entry name" value="Metallo-depent_PP-like"/>
</dbReference>
<dbReference type="InterPro" id="IPR010138">
    <property type="entry name" value="UDP-diacylglucosamine_Hdrlase"/>
</dbReference>
<dbReference type="NCBIfam" id="TIGR01854">
    <property type="entry name" value="lipid_A_lpxH"/>
    <property type="match status" value="1"/>
</dbReference>
<dbReference type="NCBIfam" id="NF003743">
    <property type="entry name" value="PRK05340.1"/>
    <property type="match status" value="1"/>
</dbReference>
<dbReference type="PANTHER" id="PTHR34990:SF1">
    <property type="entry name" value="UDP-2,3-DIACYLGLUCOSAMINE HYDROLASE"/>
    <property type="match status" value="1"/>
</dbReference>
<dbReference type="PANTHER" id="PTHR34990">
    <property type="entry name" value="UDP-2,3-DIACYLGLUCOSAMINE HYDROLASE-RELATED"/>
    <property type="match status" value="1"/>
</dbReference>
<dbReference type="Pfam" id="PF00149">
    <property type="entry name" value="Metallophos"/>
    <property type="match status" value="1"/>
</dbReference>
<dbReference type="SUPFAM" id="SSF56300">
    <property type="entry name" value="Metallo-dependent phosphatases"/>
    <property type="match status" value="1"/>
</dbReference>